<organismHost>
    <name type="scientific">Setaria italica</name>
    <name type="common">Foxtail millet</name>
    <name type="synonym">Panicum italicum</name>
    <dbReference type="NCBI Taxonomy" id="4555"/>
</organismHost>
<organismHost>
    <name type="scientific">Setaria viridis</name>
    <name type="common">Green bristlegrass</name>
    <name type="synonym">Setaria italica subsp. viridis</name>
    <dbReference type="NCBI Taxonomy" id="4556"/>
</organismHost>
<dbReference type="EMBL" id="M62730">
    <property type="protein sequence ID" value="AAA43830.1"/>
    <property type="molecule type" value="Genomic_RNA"/>
</dbReference>
<dbReference type="RefSeq" id="NP_040992.1">
    <property type="nucleotide sequence ID" value="NC_001483.1"/>
</dbReference>
<dbReference type="SMR" id="P22172"/>
<dbReference type="GeneID" id="1494013"/>
<dbReference type="KEGG" id="vg:1494013"/>
<dbReference type="OrthoDB" id="15901at10239"/>
<dbReference type="Proteomes" id="UP000008623">
    <property type="component" value="Genome"/>
</dbReference>
<dbReference type="GO" id="GO:0019029">
    <property type="term" value="C:helical viral capsid"/>
    <property type="evidence" value="ECO:0007669"/>
    <property type="project" value="UniProtKB-KW"/>
</dbReference>
<dbReference type="GO" id="GO:1990904">
    <property type="term" value="C:ribonucleoprotein complex"/>
    <property type="evidence" value="ECO:0007669"/>
    <property type="project" value="UniProtKB-KW"/>
</dbReference>
<dbReference type="GO" id="GO:0005198">
    <property type="term" value="F:structural molecule activity"/>
    <property type="evidence" value="ECO:0007669"/>
    <property type="project" value="InterPro"/>
</dbReference>
<dbReference type="InterPro" id="IPR000052">
    <property type="entry name" value="Pltvir_coat"/>
</dbReference>
<dbReference type="Pfam" id="PF00286">
    <property type="entry name" value="Flexi_CP"/>
    <property type="match status" value="1"/>
</dbReference>
<dbReference type="PROSITE" id="PS00418">
    <property type="entry name" value="POTEX_CARLAVIRUS_COAT"/>
    <property type="match status" value="1"/>
</dbReference>
<feature type="chain" id="PRO_0000222620" description="Coat protein">
    <location>
        <begin position="1"/>
        <end position="215"/>
    </location>
</feature>
<feature type="region of interest" description="Disordered" evidence="1">
    <location>
        <begin position="1"/>
        <end position="34"/>
    </location>
</feature>
<feature type="compositionally biased region" description="Basic and acidic residues" evidence="1">
    <location>
        <begin position="12"/>
        <end position="23"/>
    </location>
</feature>
<feature type="compositionally biased region" description="Polar residues" evidence="1">
    <location>
        <begin position="24"/>
        <end position="34"/>
    </location>
</feature>
<organism>
    <name type="scientific">Foxtail mosaic virus</name>
    <dbReference type="NCBI Taxonomy" id="12179"/>
    <lineage>
        <taxon>Viruses</taxon>
        <taxon>Riboviria</taxon>
        <taxon>Orthornavirae</taxon>
        <taxon>Kitrinoviricota</taxon>
        <taxon>Alsuviricetes</taxon>
        <taxon>Tymovirales</taxon>
        <taxon>Alphaflexiviridae</taxon>
        <taxon>Potexvirus</taxon>
    </lineage>
</organism>
<proteinExistence type="inferred from homology"/>
<sequence length="215" mass="23737">MATQNADVTDATDYKKPPAETEQKALTIQPRSNKAPSDEELVRIINAAQKRGLTPAAFVQAAIVFTMDKGATDSTIFTGKYNTFPMKSLALRCKDAGVPVHKLCYFYTKPAYANRRVANQPPARWTNENVPKANKWAAFDTFDALLDPYVVPSSVPYDEPTPEDRQVNEIFKKDNLSQAASRNQLLGTQASITRGRLNGAPALPNNGQYFIEAPQ</sequence>
<accession>P22172</accession>
<comment type="function">
    <text>Required for genome encapsidation. Forms ribonucleoprotein complexes along with TGB1 helicase and viral RNA.</text>
</comment>
<comment type="subcellular location">
    <subcellularLocation>
        <location evidence="2">Virion</location>
    </subcellularLocation>
</comment>
<comment type="similarity">
    <text evidence="2">Belongs to the potexvirus capsid protein family.</text>
</comment>
<reference key="1">
    <citation type="journal article" date="1991" name="J. Gen. Virol.">
        <title>The entire nucleotide sequence of foxtail mosaic virus RNA.</title>
        <authorList>
            <person name="Bancroft J.B."/>
            <person name="Rouleau M."/>
            <person name="Johnston R."/>
            <person name="Prins L."/>
            <person name="Mackie G.A."/>
        </authorList>
    </citation>
    <scope>NUCLEOTIDE SEQUENCE [GENOMIC RNA]</scope>
</reference>
<reference key="2">
    <citation type="journal article" date="2005" name="Mol. Plant Microbe Interact.">
        <title>A new cell-to-cell transport model for Potexviruses.</title>
        <authorList>
            <person name="Verchot-Lubicz J."/>
        </authorList>
    </citation>
    <scope>REVIEW</scope>
</reference>
<keyword id="KW-0167">Capsid protein</keyword>
<keyword id="KW-1139">Helical capsid protein</keyword>
<keyword id="KW-1185">Reference proteome</keyword>
<keyword id="KW-0687">Ribonucleoprotein</keyword>
<keyword id="KW-0946">Virion</keyword>
<name>CAPSD_FXMV</name>
<evidence type="ECO:0000256" key="1">
    <source>
        <dbReference type="SAM" id="MobiDB-lite"/>
    </source>
</evidence>
<evidence type="ECO:0000305" key="2"/>
<protein>
    <recommendedName>
        <fullName>Coat protein</fullName>
    </recommendedName>
    <alternativeName>
        <fullName>Capsid protein</fullName>
        <shortName>CP</shortName>
    </alternativeName>
</protein>